<feature type="chain" id="PRO_0000351205" description="Cas scaffolding protein family member 4">
    <location>
        <begin position="1"/>
        <end position="804"/>
    </location>
</feature>
<feature type="domain" description="SH3" evidence="4">
    <location>
        <begin position="11"/>
        <end position="73"/>
    </location>
</feature>
<feature type="region of interest" description="Disordered" evidence="5">
    <location>
        <begin position="369"/>
        <end position="395"/>
    </location>
</feature>
<feature type="region of interest" description="Disordered" evidence="5">
    <location>
        <begin position="607"/>
        <end position="628"/>
    </location>
</feature>
<feature type="region of interest" description="Disordered" evidence="5">
    <location>
        <begin position="642"/>
        <end position="686"/>
    </location>
</feature>
<feature type="compositionally biased region" description="Polar residues" evidence="5">
    <location>
        <begin position="380"/>
        <end position="390"/>
    </location>
</feature>
<feature type="compositionally biased region" description="Basic and acidic residues" evidence="5">
    <location>
        <begin position="649"/>
        <end position="664"/>
    </location>
</feature>
<feature type="modified residue" description="Phosphoserine" evidence="2">
    <location>
        <position position="200"/>
    </location>
</feature>
<feature type="modified residue" description="Phosphoserine" evidence="14">
    <location>
        <position position="297"/>
    </location>
</feature>
<feature type="splice variant" id="VSP_052948" description="In isoform 2." evidence="8">
    <original>Q</original>
    <variation>QAS</variation>
    <location>
        <position position="212"/>
    </location>
</feature>
<feature type="splice variant" id="VSP_052949" description="In isoform 3." evidence="9">
    <original>QSPNLQEKGKPTMEGKSNRNPDFHGMSPPPLTSPSPSGQNTER</original>
    <variation>VSQGDKQYTGDFICYLNWSSLRQMLASCACRNVHLHVHGEAIG</variation>
    <location>
        <begin position="643"/>
        <end position="685"/>
    </location>
</feature>
<feature type="splice variant" id="VSP_052950" description="In isoform 2." evidence="8">
    <location>
        <begin position="643"/>
        <end position="668"/>
    </location>
</feature>
<feature type="splice variant" id="VSP_052951" description="In isoform 3." evidence="9">
    <location>
        <begin position="686"/>
        <end position="804"/>
    </location>
</feature>
<accession>Q08EC4</accession>
<accession>A1L397</accession>
<accession>Q08EC3</accession>
<accession>Q3TCH3</accession>
<proteinExistence type="evidence at protein level"/>
<keyword id="KW-0025">Alternative splicing</keyword>
<keyword id="KW-0130">Cell adhesion</keyword>
<keyword id="KW-0965">Cell junction</keyword>
<keyword id="KW-0963">Cytoplasm</keyword>
<keyword id="KW-0206">Cytoskeleton</keyword>
<keyword id="KW-0597">Phosphoprotein</keyword>
<keyword id="KW-1185">Reference proteome</keyword>
<keyword id="KW-0728">SH3 domain</keyword>
<gene>
    <name evidence="13" type="primary">Cass4</name>
</gene>
<reference evidence="10 12" key="1">
    <citation type="journal article" date="2005" name="Science">
        <title>The transcriptional landscape of the mammalian genome.</title>
        <authorList>
            <person name="Carninci P."/>
            <person name="Kasukawa T."/>
            <person name="Katayama S."/>
            <person name="Gough J."/>
            <person name="Frith M.C."/>
            <person name="Maeda N."/>
            <person name="Oyama R."/>
            <person name="Ravasi T."/>
            <person name="Lenhard B."/>
            <person name="Wells C."/>
            <person name="Kodzius R."/>
            <person name="Shimokawa K."/>
            <person name="Bajic V.B."/>
            <person name="Brenner S.E."/>
            <person name="Batalov S."/>
            <person name="Forrest A.R."/>
            <person name="Zavolan M."/>
            <person name="Davis M.J."/>
            <person name="Wilming L.G."/>
            <person name="Aidinis V."/>
            <person name="Allen J.E."/>
            <person name="Ambesi-Impiombato A."/>
            <person name="Apweiler R."/>
            <person name="Aturaliya R.N."/>
            <person name="Bailey T.L."/>
            <person name="Bansal M."/>
            <person name="Baxter L."/>
            <person name="Beisel K.W."/>
            <person name="Bersano T."/>
            <person name="Bono H."/>
            <person name="Chalk A.M."/>
            <person name="Chiu K.P."/>
            <person name="Choudhary V."/>
            <person name="Christoffels A."/>
            <person name="Clutterbuck D.R."/>
            <person name="Crowe M.L."/>
            <person name="Dalla E."/>
            <person name="Dalrymple B.P."/>
            <person name="de Bono B."/>
            <person name="Della Gatta G."/>
            <person name="di Bernardo D."/>
            <person name="Down T."/>
            <person name="Engstrom P."/>
            <person name="Fagiolini M."/>
            <person name="Faulkner G."/>
            <person name="Fletcher C.F."/>
            <person name="Fukushima T."/>
            <person name="Furuno M."/>
            <person name="Futaki S."/>
            <person name="Gariboldi M."/>
            <person name="Georgii-Hemming P."/>
            <person name="Gingeras T.R."/>
            <person name="Gojobori T."/>
            <person name="Green R.E."/>
            <person name="Gustincich S."/>
            <person name="Harbers M."/>
            <person name="Hayashi Y."/>
            <person name="Hensch T.K."/>
            <person name="Hirokawa N."/>
            <person name="Hill D."/>
            <person name="Huminiecki L."/>
            <person name="Iacono M."/>
            <person name="Ikeo K."/>
            <person name="Iwama A."/>
            <person name="Ishikawa T."/>
            <person name="Jakt M."/>
            <person name="Kanapin A."/>
            <person name="Katoh M."/>
            <person name="Kawasawa Y."/>
            <person name="Kelso J."/>
            <person name="Kitamura H."/>
            <person name="Kitano H."/>
            <person name="Kollias G."/>
            <person name="Krishnan S.P."/>
            <person name="Kruger A."/>
            <person name="Kummerfeld S.K."/>
            <person name="Kurochkin I.V."/>
            <person name="Lareau L.F."/>
            <person name="Lazarevic D."/>
            <person name="Lipovich L."/>
            <person name="Liu J."/>
            <person name="Liuni S."/>
            <person name="McWilliam S."/>
            <person name="Madan Babu M."/>
            <person name="Madera M."/>
            <person name="Marchionni L."/>
            <person name="Matsuda H."/>
            <person name="Matsuzawa S."/>
            <person name="Miki H."/>
            <person name="Mignone F."/>
            <person name="Miyake S."/>
            <person name="Morris K."/>
            <person name="Mottagui-Tabar S."/>
            <person name="Mulder N."/>
            <person name="Nakano N."/>
            <person name="Nakauchi H."/>
            <person name="Ng P."/>
            <person name="Nilsson R."/>
            <person name="Nishiguchi S."/>
            <person name="Nishikawa S."/>
            <person name="Nori F."/>
            <person name="Ohara O."/>
            <person name="Okazaki Y."/>
            <person name="Orlando V."/>
            <person name="Pang K.C."/>
            <person name="Pavan W.J."/>
            <person name="Pavesi G."/>
            <person name="Pesole G."/>
            <person name="Petrovsky N."/>
            <person name="Piazza S."/>
            <person name="Reed J."/>
            <person name="Reid J.F."/>
            <person name="Ring B.Z."/>
            <person name="Ringwald M."/>
            <person name="Rost B."/>
            <person name="Ruan Y."/>
            <person name="Salzberg S.L."/>
            <person name="Sandelin A."/>
            <person name="Schneider C."/>
            <person name="Schoenbach C."/>
            <person name="Sekiguchi K."/>
            <person name="Semple C.A."/>
            <person name="Seno S."/>
            <person name="Sessa L."/>
            <person name="Sheng Y."/>
            <person name="Shibata Y."/>
            <person name="Shimada H."/>
            <person name="Shimada K."/>
            <person name="Silva D."/>
            <person name="Sinclair B."/>
            <person name="Sperling S."/>
            <person name="Stupka E."/>
            <person name="Sugiura K."/>
            <person name="Sultana R."/>
            <person name="Takenaka Y."/>
            <person name="Taki K."/>
            <person name="Tammoja K."/>
            <person name="Tan S.L."/>
            <person name="Tang S."/>
            <person name="Taylor M.S."/>
            <person name="Tegner J."/>
            <person name="Teichmann S.A."/>
            <person name="Ueda H.R."/>
            <person name="van Nimwegen E."/>
            <person name="Verardo R."/>
            <person name="Wei C.L."/>
            <person name="Yagi K."/>
            <person name="Yamanishi H."/>
            <person name="Zabarovsky E."/>
            <person name="Zhu S."/>
            <person name="Zimmer A."/>
            <person name="Hide W."/>
            <person name="Bult C."/>
            <person name="Grimmond S.M."/>
            <person name="Teasdale R.D."/>
            <person name="Liu E.T."/>
            <person name="Brusic V."/>
            <person name="Quackenbush J."/>
            <person name="Wahlestedt C."/>
            <person name="Mattick J.S."/>
            <person name="Hume D.A."/>
            <person name="Kai C."/>
            <person name="Sasaki D."/>
            <person name="Tomaru Y."/>
            <person name="Fukuda S."/>
            <person name="Kanamori-Katayama M."/>
            <person name="Suzuki M."/>
            <person name="Aoki J."/>
            <person name="Arakawa T."/>
            <person name="Iida J."/>
            <person name="Imamura K."/>
            <person name="Itoh M."/>
            <person name="Kato T."/>
            <person name="Kawaji H."/>
            <person name="Kawagashira N."/>
            <person name="Kawashima T."/>
            <person name="Kojima M."/>
            <person name="Kondo S."/>
            <person name="Konno H."/>
            <person name="Nakano K."/>
            <person name="Ninomiya N."/>
            <person name="Nishio T."/>
            <person name="Okada M."/>
            <person name="Plessy C."/>
            <person name="Shibata K."/>
            <person name="Shiraki T."/>
            <person name="Suzuki S."/>
            <person name="Tagami M."/>
            <person name="Waki K."/>
            <person name="Watahiki A."/>
            <person name="Okamura-Oho Y."/>
            <person name="Suzuki H."/>
            <person name="Kawai J."/>
            <person name="Hayashizaki Y."/>
        </authorList>
    </citation>
    <scope>NUCLEOTIDE SEQUENCE [LARGE SCALE MRNA] (ISOFORM 3)</scope>
    <source>
        <strain evidence="12">NOD</strain>
        <tissue evidence="12">Dendritic cell</tissue>
    </source>
</reference>
<reference key="2">
    <citation type="journal article" date="2009" name="PLoS Biol.">
        <title>Lineage-specific biology revealed by a finished genome assembly of the mouse.</title>
        <authorList>
            <person name="Church D.M."/>
            <person name="Goodstadt L."/>
            <person name="Hillier L.W."/>
            <person name="Zody M.C."/>
            <person name="Goldstein S."/>
            <person name="She X."/>
            <person name="Bult C.J."/>
            <person name="Agarwala R."/>
            <person name="Cherry J.L."/>
            <person name="DiCuccio M."/>
            <person name="Hlavina W."/>
            <person name="Kapustin Y."/>
            <person name="Meric P."/>
            <person name="Maglott D."/>
            <person name="Birtle Z."/>
            <person name="Marques A.C."/>
            <person name="Graves T."/>
            <person name="Zhou S."/>
            <person name="Teague B."/>
            <person name="Potamousis K."/>
            <person name="Churas C."/>
            <person name="Place M."/>
            <person name="Herschleb J."/>
            <person name="Runnheim R."/>
            <person name="Forrest D."/>
            <person name="Amos-Landgraf J."/>
            <person name="Schwartz D.C."/>
            <person name="Cheng Z."/>
            <person name="Lindblad-Toh K."/>
            <person name="Eichler E.E."/>
            <person name="Ponting C.P."/>
        </authorList>
    </citation>
    <scope>NUCLEOTIDE SEQUENCE [LARGE SCALE GENOMIC DNA]</scope>
    <source>
        <strain>C57BL/6J</strain>
    </source>
</reference>
<reference evidence="10 11" key="3">
    <citation type="journal article" date="2004" name="Genome Res.">
        <title>The status, quality, and expansion of the NIH full-length cDNA project: the Mammalian Gene Collection (MGC).</title>
        <authorList>
            <consortium name="The MGC Project Team"/>
        </authorList>
    </citation>
    <scope>NUCLEOTIDE SEQUENCE [LARGE SCALE MRNA] (ISOFORMS 1 AND 2)</scope>
</reference>
<reference key="4">
    <citation type="journal article" date="2010" name="Cell">
        <title>A tissue-specific atlas of mouse protein phosphorylation and expression.</title>
        <authorList>
            <person name="Huttlin E.L."/>
            <person name="Jedrychowski M.P."/>
            <person name="Elias J.E."/>
            <person name="Goswami T."/>
            <person name="Rad R."/>
            <person name="Beausoleil S.A."/>
            <person name="Villen J."/>
            <person name="Haas W."/>
            <person name="Sowa M.E."/>
            <person name="Gygi S.P."/>
        </authorList>
    </citation>
    <scope>PHOSPHORYLATION [LARGE SCALE ANALYSIS] AT SER-297</scope>
    <scope>IDENTIFICATION BY MASS SPECTROMETRY [LARGE SCALE ANALYSIS]</scope>
    <source>
        <tissue>Lung</tissue>
        <tissue>Spleen</tissue>
    </source>
</reference>
<evidence type="ECO:0000250" key="1"/>
<evidence type="ECO:0000250" key="2">
    <source>
        <dbReference type="UniProtKB" id="Q9NQ75"/>
    </source>
</evidence>
<evidence type="ECO:0000255" key="3"/>
<evidence type="ECO:0000255" key="4">
    <source>
        <dbReference type="PROSITE-ProRule" id="PRU00192"/>
    </source>
</evidence>
<evidence type="ECO:0000256" key="5">
    <source>
        <dbReference type="SAM" id="MobiDB-lite"/>
    </source>
</evidence>
<evidence type="ECO:0000269" key="6">
    <source>
    </source>
</evidence>
<evidence type="ECO:0000269" key="7">
    <source>
    </source>
</evidence>
<evidence type="ECO:0000303" key="8">
    <source>
    </source>
</evidence>
<evidence type="ECO:0000303" key="9">
    <source>
    </source>
</evidence>
<evidence type="ECO:0000305" key="10"/>
<evidence type="ECO:0000312" key="11">
    <source>
        <dbReference type="EMBL" id="AAI17859.1"/>
    </source>
</evidence>
<evidence type="ECO:0000312" key="12">
    <source>
        <dbReference type="EMBL" id="BAE41983.1"/>
    </source>
</evidence>
<evidence type="ECO:0000312" key="13">
    <source>
        <dbReference type="MGI" id="MGI:2444482"/>
    </source>
</evidence>
<evidence type="ECO:0007744" key="14">
    <source>
    </source>
</evidence>
<sequence>MRGTSIREGAPKTLLARALYDNHADCSDELAFSRGDILTIVEQNVPESEGWWRCLLHGRQGLAPANRLQVLRETPADRPCPLLPRGPDTDLTSSGAPYQVQDLISPPPQGPVYEPMRSWVEGPSPATAQVYELPESPSSARIICEKTLSFPKQALSVLPRPTRASLPTLPSQVYDVPVQRQGFSTLERLEKQQFYDIPTSSQKALLHSSTSQGRDVTLAPTMAFRQGGGYNPLSSPQKSERIHDTPVLLEKADVRNVSMTSFTKDSGSRAIPGSSAVHTGAVALSPQLGNTVQRKNSLPEEPTYAFPTSRDPLPSDAGGSYKVPSRFLIPRVEQQNTMPNIYDTPKAMQGVSHNAPKAMQGVSLAGKELERGREAPENSPWISGQTSFLSPDSDRLSVASSDSRASVVSSCSSISMDSSSGSSSEDSVKELWMDVDFAKETAVSLQHKVASSAAGLLLFVSRTWRFKDSLETNIHRIRRAADHVEESVREFLDFAQGVGGTACNLTDSYLQARIRDQLQTISSSYQTLLDAKGSLDRCNWSLEVLVTDKVQNSLDDLERFVATARIVPEDVKRFTSIVIANGKLLFKQNCEKGEMDLKCERCIRPPQRETESYQESSPFDRQPTTEHSFELARKNRVNVCWQQSPNLQEKGKPTMEGKSNRNPDFHGMSPPPLTSPSPSGQNTERKIHLSKHSRLYFGALFKAISVFASSLSNGQPPEVFITQSKLVITVGQKLVDTLCSETQEKDERNEILCGSSHLCGLLKDLALATKSAVIQYPSPSALSLLQSEVERLEHHSRKFRDTLE</sequence>
<organism>
    <name type="scientific">Mus musculus</name>
    <name type="common">Mouse</name>
    <dbReference type="NCBI Taxonomy" id="10090"/>
    <lineage>
        <taxon>Eukaryota</taxon>
        <taxon>Metazoa</taxon>
        <taxon>Chordata</taxon>
        <taxon>Craniata</taxon>
        <taxon>Vertebrata</taxon>
        <taxon>Euteleostomi</taxon>
        <taxon>Mammalia</taxon>
        <taxon>Eutheria</taxon>
        <taxon>Euarchontoglires</taxon>
        <taxon>Glires</taxon>
        <taxon>Rodentia</taxon>
        <taxon>Myomorpha</taxon>
        <taxon>Muroidea</taxon>
        <taxon>Muridae</taxon>
        <taxon>Murinae</taxon>
        <taxon>Mus</taxon>
        <taxon>Mus</taxon>
    </lineage>
</organism>
<comment type="function">
    <text evidence="1">Docking protein that plays a role in tyrosine kinase-based signaling related to cell adhesion and cell spreading. Regulates PTK2/FAK1 activity, focal adhesion integrity, and cell spreading (By similarity).</text>
</comment>
<comment type="subunit">
    <text evidence="1">Interacts (via SH3 domain) with PTK2/FAK1 (via C-terminus).</text>
</comment>
<comment type="subcellular location">
    <subcellularLocation>
        <location evidence="2">Cytoplasm</location>
        <location evidence="2">Cytoskeleton</location>
    </subcellularLocation>
    <subcellularLocation>
        <location evidence="2">Cell junction</location>
        <location evidence="2">Focal adhesion</location>
    </subcellularLocation>
</comment>
<comment type="alternative products">
    <event type="alternative splicing"/>
    <isoform>
        <id>Q08EC4-1</id>
        <name evidence="6">1</name>
        <sequence type="displayed"/>
    </isoform>
    <isoform>
        <id>Q08EC4-2</id>
        <name evidence="6">2</name>
        <sequence type="described" ref="VSP_052948 VSP_052950"/>
    </isoform>
    <isoform>
        <id>Q08EC4-3</id>
        <name evidence="7">3</name>
        <sequence type="described" ref="VSP_052949 VSP_052951"/>
    </isoform>
</comment>
<comment type="PTM">
    <text evidence="2">Phosphorylated on tyrosines by SRC.</text>
</comment>
<comment type="similarity">
    <text evidence="3">Belongs to the CAS family.</text>
</comment>
<protein>
    <recommendedName>
        <fullName evidence="11">Cas scaffolding protein family member 4</fullName>
    </recommendedName>
</protein>
<dbReference type="EMBL" id="AK170726">
    <property type="protein sequence ID" value="BAE41983.1"/>
    <property type="molecule type" value="mRNA"/>
</dbReference>
<dbReference type="EMBL" id="AL833787">
    <property type="status" value="NOT_ANNOTATED_CDS"/>
    <property type="molecule type" value="Genomic_DNA"/>
</dbReference>
<dbReference type="EMBL" id="BC117858">
    <property type="protein sequence ID" value="AAI17859.1"/>
    <property type="molecule type" value="mRNA"/>
</dbReference>
<dbReference type="EMBL" id="BC117859">
    <property type="protein sequence ID" value="AAI17860.1"/>
    <property type="molecule type" value="mRNA"/>
</dbReference>
<dbReference type="EMBL" id="BC129975">
    <property type="protein sequence ID" value="AAI29976.1"/>
    <property type="molecule type" value="mRNA"/>
</dbReference>
<dbReference type="EMBL" id="BC129976">
    <property type="protein sequence ID" value="AAI29977.1"/>
    <property type="molecule type" value="mRNA"/>
</dbReference>
<dbReference type="CCDS" id="CCDS38347.1">
    <molecule id="Q08EC4-1"/>
</dbReference>
<dbReference type="CCDS" id="CCDS89589.1">
    <molecule id="Q08EC4-2"/>
</dbReference>
<dbReference type="RefSeq" id="NP_001074289.1">
    <molecule id="Q08EC4-1"/>
    <property type="nucleotide sequence ID" value="NM_001080820.4"/>
</dbReference>
<dbReference type="RefSeq" id="NP_001263351.1">
    <molecule id="Q08EC4-2"/>
    <property type="nucleotide sequence ID" value="NM_001276422.3"/>
</dbReference>
<dbReference type="RefSeq" id="NP_001263352.1">
    <property type="nucleotide sequence ID" value="NM_001276423.1"/>
</dbReference>
<dbReference type="SMR" id="Q08EC4"/>
<dbReference type="BioGRID" id="236200">
    <property type="interactions" value="4"/>
</dbReference>
<dbReference type="FunCoup" id="Q08EC4">
    <property type="interactions" value="261"/>
</dbReference>
<dbReference type="STRING" id="10090.ENSMUSP00000104764"/>
<dbReference type="iPTMnet" id="Q08EC4"/>
<dbReference type="PhosphoSitePlus" id="Q08EC4"/>
<dbReference type="PaxDb" id="10090-ENSMUSP00000104764"/>
<dbReference type="PeptideAtlas" id="Q08EC4"/>
<dbReference type="ProteomicsDB" id="279917">
    <molecule id="Q08EC4-1"/>
</dbReference>
<dbReference type="ProteomicsDB" id="279918">
    <molecule id="Q08EC4-2"/>
</dbReference>
<dbReference type="ProteomicsDB" id="279919">
    <molecule id="Q08EC4-3"/>
</dbReference>
<dbReference type="Antibodypedia" id="2766">
    <property type="antibodies" value="79 antibodies from 19 providers"/>
</dbReference>
<dbReference type="DNASU" id="320664"/>
<dbReference type="Ensembl" id="ENSMUST00000099061.9">
    <molecule id="Q08EC4-3"/>
    <property type="protein sequence ID" value="ENSMUSP00000096660.3"/>
    <property type="gene ID" value="ENSMUSG00000074570.15"/>
</dbReference>
<dbReference type="Ensembl" id="ENSMUST00000109136.3">
    <molecule id="Q08EC4-1"/>
    <property type="protein sequence ID" value="ENSMUSP00000104764.3"/>
    <property type="gene ID" value="ENSMUSG00000074570.15"/>
</dbReference>
<dbReference type="Ensembl" id="ENSMUST00000228775.2">
    <molecule id="Q08EC4-2"/>
    <property type="protein sequence ID" value="ENSMUSP00000154073.2"/>
    <property type="gene ID" value="ENSMUSG00000074570.15"/>
</dbReference>
<dbReference type="GeneID" id="320664"/>
<dbReference type="KEGG" id="mmu:320664"/>
<dbReference type="UCSC" id="uc008ocr.1">
    <molecule id="Q08EC4-3"/>
    <property type="organism name" value="mouse"/>
</dbReference>
<dbReference type="UCSC" id="uc008ocs.2">
    <molecule id="Q08EC4-1"/>
    <property type="organism name" value="mouse"/>
</dbReference>
<dbReference type="UCSC" id="uc008oct.2">
    <molecule id="Q08EC4-2"/>
    <property type="organism name" value="mouse"/>
</dbReference>
<dbReference type="AGR" id="MGI:2444482"/>
<dbReference type="CTD" id="57091"/>
<dbReference type="MGI" id="MGI:2444482">
    <property type="gene designation" value="Cass4"/>
</dbReference>
<dbReference type="VEuPathDB" id="HostDB:ENSMUSG00000074570"/>
<dbReference type="eggNOG" id="ENOG502QUJM">
    <property type="taxonomic scope" value="Eukaryota"/>
</dbReference>
<dbReference type="GeneTree" id="ENSGT00950000183008"/>
<dbReference type="InParanoid" id="Q08EC4"/>
<dbReference type="OMA" id="TYERMDM"/>
<dbReference type="OrthoDB" id="5983572at2759"/>
<dbReference type="PhylomeDB" id="Q08EC4"/>
<dbReference type="TreeFam" id="TF328782"/>
<dbReference type="BioGRID-ORCS" id="320664">
    <property type="hits" value="0 hits in 77 CRISPR screens"/>
</dbReference>
<dbReference type="ChiTaRS" id="Cass4">
    <property type="organism name" value="mouse"/>
</dbReference>
<dbReference type="PRO" id="PR:Q08EC4"/>
<dbReference type="Proteomes" id="UP000000589">
    <property type="component" value="Chromosome 2"/>
</dbReference>
<dbReference type="RNAct" id="Q08EC4">
    <property type="molecule type" value="protein"/>
</dbReference>
<dbReference type="Bgee" id="ENSMUSG00000074570">
    <property type="expression patterns" value="Expressed in left lung lobe and 46 other cell types or tissues"/>
</dbReference>
<dbReference type="ExpressionAtlas" id="Q08EC4">
    <property type="expression patterns" value="baseline and differential"/>
</dbReference>
<dbReference type="GO" id="GO:0005737">
    <property type="term" value="C:cytoplasm"/>
    <property type="evidence" value="ECO:0007669"/>
    <property type="project" value="UniProtKB-KW"/>
</dbReference>
<dbReference type="GO" id="GO:0005856">
    <property type="term" value="C:cytoskeleton"/>
    <property type="evidence" value="ECO:0007669"/>
    <property type="project" value="UniProtKB-SubCell"/>
</dbReference>
<dbReference type="GO" id="GO:0005925">
    <property type="term" value="C:focal adhesion"/>
    <property type="evidence" value="ECO:0000250"/>
    <property type="project" value="UniProtKB"/>
</dbReference>
<dbReference type="GO" id="GO:1990782">
    <property type="term" value="F:protein tyrosine kinase binding"/>
    <property type="evidence" value="ECO:0007669"/>
    <property type="project" value="Ensembl"/>
</dbReference>
<dbReference type="GO" id="GO:0007155">
    <property type="term" value="P:cell adhesion"/>
    <property type="evidence" value="ECO:0007669"/>
    <property type="project" value="UniProtKB-KW"/>
</dbReference>
<dbReference type="GO" id="GO:0030335">
    <property type="term" value="P:positive regulation of cell migration"/>
    <property type="evidence" value="ECO:0000250"/>
    <property type="project" value="UniProtKB"/>
</dbReference>
<dbReference type="GO" id="GO:0051897">
    <property type="term" value="P:positive regulation of phosphatidylinositol 3-kinase/protein kinase B signal transduction"/>
    <property type="evidence" value="ECO:0007669"/>
    <property type="project" value="Ensembl"/>
</dbReference>
<dbReference type="GO" id="GO:0061098">
    <property type="term" value="P:positive regulation of protein tyrosine kinase activity"/>
    <property type="evidence" value="ECO:0000250"/>
    <property type="project" value="UniProtKB"/>
</dbReference>
<dbReference type="GO" id="GO:1900026">
    <property type="term" value="P:positive regulation of substrate adhesion-dependent cell spreading"/>
    <property type="evidence" value="ECO:0000250"/>
    <property type="project" value="UniProtKB"/>
</dbReference>
<dbReference type="CDD" id="cd12000">
    <property type="entry name" value="SH3_CASS4"/>
    <property type="match status" value="1"/>
</dbReference>
<dbReference type="FunFam" id="1.20.120.830:FF:000001">
    <property type="entry name" value="BCAR1 scaffold protein, Cas family member"/>
    <property type="match status" value="1"/>
</dbReference>
<dbReference type="FunFam" id="2.30.30.40:FF:000147">
    <property type="entry name" value="Cas scaffold protein family member 4"/>
    <property type="match status" value="1"/>
</dbReference>
<dbReference type="Gene3D" id="1.20.120.230">
    <property type="entry name" value="Alpha-catenin/vinculin-like"/>
    <property type="match status" value="1"/>
</dbReference>
<dbReference type="Gene3D" id="1.20.120.830">
    <property type="entry name" value="Serine-rich domain"/>
    <property type="match status" value="1"/>
</dbReference>
<dbReference type="Gene3D" id="2.30.30.40">
    <property type="entry name" value="SH3 Domains"/>
    <property type="match status" value="1"/>
</dbReference>
<dbReference type="InterPro" id="IPR021901">
    <property type="entry name" value="CAS_C"/>
</dbReference>
<dbReference type="InterPro" id="IPR037362">
    <property type="entry name" value="CAS_fam"/>
</dbReference>
<dbReference type="InterPro" id="IPR035744">
    <property type="entry name" value="CASS4_SH3"/>
</dbReference>
<dbReference type="InterPro" id="IPR014928">
    <property type="entry name" value="Serine_rich_dom"/>
</dbReference>
<dbReference type="InterPro" id="IPR038319">
    <property type="entry name" value="Serine_rich_sf"/>
</dbReference>
<dbReference type="InterPro" id="IPR036028">
    <property type="entry name" value="SH3-like_dom_sf"/>
</dbReference>
<dbReference type="InterPro" id="IPR001452">
    <property type="entry name" value="SH3_domain"/>
</dbReference>
<dbReference type="PANTHER" id="PTHR10654">
    <property type="entry name" value="CAS SCAFFOLDING PROTEIN"/>
    <property type="match status" value="1"/>
</dbReference>
<dbReference type="PANTHER" id="PTHR10654:SF19">
    <property type="entry name" value="CAS SCAFFOLDING PROTEIN FAMILY MEMBER 4"/>
    <property type="match status" value="1"/>
</dbReference>
<dbReference type="Pfam" id="PF12026">
    <property type="entry name" value="CAS_C"/>
    <property type="match status" value="1"/>
</dbReference>
<dbReference type="Pfam" id="PF08824">
    <property type="entry name" value="Serine_rich"/>
    <property type="match status" value="1"/>
</dbReference>
<dbReference type="Pfam" id="PF14604">
    <property type="entry name" value="SH3_9"/>
    <property type="match status" value="1"/>
</dbReference>
<dbReference type="SMART" id="SM00326">
    <property type="entry name" value="SH3"/>
    <property type="match status" value="1"/>
</dbReference>
<dbReference type="SUPFAM" id="SSF50044">
    <property type="entry name" value="SH3-domain"/>
    <property type="match status" value="1"/>
</dbReference>
<dbReference type="PROSITE" id="PS50002">
    <property type="entry name" value="SH3"/>
    <property type="match status" value="1"/>
</dbReference>
<name>CASS4_MOUSE</name>